<name>AMSH2_ARATH</name>
<feature type="chain" id="PRO_0000397099" description="AMSH-like ubiquitin thioesterase 2">
    <location>
        <begin position="1"/>
        <end position="223"/>
    </location>
</feature>
<feature type="domain" description="MPN" evidence="2">
    <location>
        <begin position="49"/>
        <end position="177"/>
    </location>
</feature>
<feature type="short sequence motif" description="JAMM motif" evidence="2">
    <location>
        <begin position="127"/>
        <end position="140"/>
    </location>
</feature>
<feature type="binding site" evidence="2">
    <location>
        <position position="127"/>
    </location>
    <ligand>
        <name>Zn(2+)</name>
        <dbReference type="ChEBI" id="CHEBI:29105"/>
        <label>1</label>
        <note>catalytic</note>
    </ligand>
</feature>
<feature type="binding site" evidence="2">
    <location>
        <position position="129"/>
    </location>
    <ligand>
        <name>Zn(2+)</name>
        <dbReference type="ChEBI" id="CHEBI:29105"/>
        <label>1</label>
        <note>catalytic</note>
    </ligand>
</feature>
<feature type="binding site" evidence="2">
    <location>
        <position position="140"/>
    </location>
    <ligand>
        <name>Zn(2+)</name>
        <dbReference type="ChEBI" id="CHEBI:29105"/>
        <label>1</label>
        <note>catalytic</note>
    </ligand>
</feature>
<feature type="binding site" evidence="1">
    <location>
        <position position="142"/>
    </location>
    <ligand>
        <name>Zn(2+)</name>
        <dbReference type="ChEBI" id="CHEBI:29105"/>
        <label>2</label>
    </ligand>
</feature>
<feature type="binding site" evidence="1">
    <location>
        <position position="185"/>
    </location>
    <ligand>
        <name>Zn(2+)</name>
        <dbReference type="ChEBI" id="CHEBI:29105"/>
        <label>2</label>
    </ligand>
</feature>
<feature type="binding site" evidence="1">
    <location>
        <position position="191"/>
    </location>
    <ligand>
        <name>Zn(2+)</name>
        <dbReference type="ChEBI" id="CHEBI:29105"/>
        <label>2</label>
    </ligand>
</feature>
<feature type="binding site" evidence="1">
    <location>
        <position position="193"/>
    </location>
    <ligand>
        <name>Zn(2+)</name>
        <dbReference type="ChEBI" id="CHEBI:29105"/>
        <label>2</label>
    </ligand>
</feature>
<feature type="site" description="Indirect zinc-binding" evidence="1">
    <location>
        <position position="72"/>
    </location>
</feature>
<feature type="splice variant" id="VSP_039635" description="In isoform 3." evidence="3">
    <original>MVTLSSPSPSLSCVENVTCKSSHVSRVLISGTDNINHGESSEAKILRDVHISERLLEDFTELARENTEKDLETCGTLAAFLERGIFYVTTLIIPKQESTSNS</original>
    <variation>MFISQKGYWRISLSLQERTLRRTSRLVGLSLPFLVLRFSSFMNLM</variation>
    <location>
        <begin position="1"/>
        <end position="102"/>
    </location>
</feature>
<feature type="splice variant" id="VSP_039636" description="In isoform 2." evidence="4">
    <original>KS</original>
    <variation>N</variation>
    <location>
        <begin position="166"/>
        <end position="167"/>
    </location>
</feature>
<dbReference type="EC" id="3.4.19.-"/>
<dbReference type="EMBL" id="AC007067">
    <property type="protein sequence ID" value="AAD39585.1"/>
    <property type="status" value="ALT_SEQ"/>
    <property type="molecule type" value="Genomic_DNA"/>
</dbReference>
<dbReference type="EMBL" id="AC009398">
    <property type="protein sequence ID" value="AAF17652.1"/>
    <property type="status" value="ALT_SEQ"/>
    <property type="molecule type" value="Genomic_DNA"/>
</dbReference>
<dbReference type="EMBL" id="CP002684">
    <property type="protein sequence ID" value="AEE28606.1"/>
    <property type="molecule type" value="Genomic_DNA"/>
</dbReference>
<dbReference type="EMBL" id="CP002684">
    <property type="protein sequence ID" value="AEE28607.1"/>
    <property type="molecule type" value="Genomic_DNA"/>
</dbReference>
<dbReference type="EMBL" id="CP002684">
    <property type="protein sequence ID" value="AEE28608.1"/>
    <property type="molecule type" value="Genomic_DNA"/>
</dbReference>
<dbReference type="EMBL" id="CP002684">
    <property type="protein sequence ID" value="ANM61042.1"/>
    <property type="molecule type" value="Genomic_DNA"/>
</dbReference>
<dbReference type="EMBL" id="AK317451">
    <property type="protein sequence ID" value="BAH20118.1"/>
    <property type="molecule type" value="mRNA"/>
</dbReference>
<dbReference type="EMBL" id="BT012645">
    <property type="protein sequence ID" value="AAT06464.1"/>
    <property type="molecule type" value="mRNA"/>
</dbReference>
<dbReference type="EMBL" id="AK175458">
    <property type="protein sequence ID" value="BAD43221.1"/>
    <property type="molecule type" value="mRNA"/>
</dbReference>
<dbReference type="PIR" id="E86239">
    <property type="entry name" value="E86239"/>
</dbReference>
<dbReference type="RefSeq" id="NP_001031020.1">
    <molecule id="Q6NKP9-3"/>
    <property type="nucleotide sequence ID" value="NM_001035943.2"/>
</dbReference>
<dbReference type="RefSeq" id="NP_001077505.1">
    <molecule id="Q6NKP9-2"/>
    <property type="nucleotide sequence ID" value="NM_001084036.1"/>
</dbReference>
<dbReference type="RefSeq" id="NP_001323286.1">
    <molecule id="Q6NKP9-1"/>
    <property type="nucleotide sequence ID" value="NM_001331916.1"/>
</dbReference>
<dbReference type="RefSeq" id="NP_172530.2">
    <molecule id="Q6NKP9-1"/>
    <property type="nucleotide sequence ID" value="NM_100936.3"/>
</dbReference>
<dbReference type="SMR" id="Q6NKP9"/>
<dbReference type="FunCoup" id="Q6NKP9">
    <property type="interactions" value="239"/>
</dbReference>
<dbReference type="STRING" id="3702.Q6NKP9"/>
<dbReference type="MEROPS" id="M67.A05"/>
<dbReference type="GlyGen" id="Q6NKP9">
    <property type="glycosylation" value="1 site"/>
</dbReference>
<dbReference type="iPTMnet" id="Q6NKP9"/>
<dbReference type="PaxDb" id="3702-AT1G10600.1"/>
<dbReference type="ProteomicsDB" id="245041">
    <molecule id="Q6NKP9-1"/>
</dbReference>
<dbReference type="EnsemblPlants" id="AT1G10600.1">
    <molecule id="Q6NKP9-1"/>
    <property type="protein sequence ID" value="AT1G10600.1"/>
    <property type="gene ID" value="AT1G10600"/>
</dbReference>
<dbReference type="EnsemblPlants" id="AT1G10600.2">
    <molecule id="Q6NKP9-3"/>
    <property type="protein sequence ID" value="AT1G10600.2"/>
    <property type="gene ID" value="AT1G10600"/>
</dbReference>
<dbReference type="EnsemblPlants" id="AT1G10600.3">
    <molecule id="Q6NKP9-2"/>
    <property type="protein sequence ID" value="AT1G10600.3"/>
    <property type="gene ID" value="AT1G10600"/>
</dbReference>
<dbReference type="EnsemblPlants" id="AT1G10600.4">
    <molecule id="Q6NKP9-1"/>
    <property type="protein sequence ID" value="AT1G10600.4"/>
    <property type="gene ID" value="AT1G10600"/>
</dbReference>
<dbReference type="GeneID" id="837603"/>
<dbReference type="Gramene" id="AT1G10600.1">
    <molecule id="Q6NKP9-1"/>
    <property type="protein sequence ID" value="AT1G10600.1"/>
    <property type="gene ID" value="AT1G10600"/>
</dbReference>
<dbReference type="Gramene" id="AT1G10600.2">
    <molecule id="Q6NKP9-3"/>
    <property type="protein sequence ID" value="AT1G10600.2"/>
    <property type="gene ID" value="AT1G10600"/>
</dbReference>
<dbReference type="Gramene" id="AT1G10600.3">
    <molecule id="Q6NKP9-2"/>
    <property type="protein sequence ID" value="AT1G10600.3"/>
    <property type="gene ID" value="AT1G10600"/>
</dbReference>
<dbReference type="Gramene" id="AT1G10600.4">
    <molecule id="Q6NKP9-1"/>
    <property type="protein sequence ID" value="AT1G10600.4"/>
    <property type="gene ID" value="AT1G10600"/>
</dbReference>
<dbReference type="KEGG" id="ath:AT1G10600"/>
<dbReference type="Araport" id="AT1G10600"/>
<dbReference type="TAIR" id="AT1G10600">
    <property type="gene designation" value="AMSH2"/>
</dbReference>
<dbReference type="eggNOG" id="KOG2880">
    <property type="taxonomic scope" value="Eukaryota"/>
</dbReference>
<dbReference type="InParanoid" id="Q6NKP9"/>
<dbReference type="OMA" id="QYSYQAM"/>
<dbReference type="OrthoDB" id="3640at2759"/>
<dbReference type="PhylomeDB" id="Q6NKP9"/>
<dbReference type="PRO" id="PR:Q6NKP9"/>
<dbReference type="Proteomes" id="UP000006548">
    <property type="component" value="Chromosome 1"/>
</dbReference>
<dbReference type="ExpressionAtlas" id="Q6NKP9">
    <property type="expression patterns" value="baseline and differential"/>
</dbReference>
<dbReference type="GO" id="GO:0061578">
    <property type="term" value="F:K63-linked deubiquitinase activity"/>
    <property type="evidence" value="ECO:0007669"/>
    <property type="project" value="InterPro"/>
</dbReference>
<dbReference type="GO" id="GO:0046872">
    <property type="term" value="F:metal ion binding"/>
    <property type="evidence" value="ECO:0007669"/>
    <property type="project" value="UniProtKB-KW"/>
</dbReference>
<dbReference type="GO" id="GO:0140492">
    <property type="term" value="F:metal-dependent deubiquitinase activity"/>
    <property type="evidence" value="ECO:0007669"/>
    <property type="project" value="InterPro"/>
</dbReference>
<dbReference type="GO" id="GO:0071108">
    <property type="term" value="P:protein K48-linked deubiquitination"/>
    <property type="evidence" value="ECO:0000250"/>
    <property type="project" value="UniProtKB"/>
</dbReference>
<dbReference type="GO" id="GO:0070536">
    <property type="term" value="P:protein K63-linked deubiquitination"/>
    <property type="evidence" value="ECO:0000250"/>
    <property type="project" value="UniProtKB"/>
</dbReference>
<dbReference type="GO" id="GO:0006508">
    <property type="term" value="P:proteolysis"/>
    <property type="evidence" value="ECO:0007669"/>
    <property type="project" value="UniProtKB-KW"/>
</dbReference>
<dbReference type="CDD" id="cd08066">
    <property type="entry name" value="MPN_AMSH_like"/>
    <property type="match status" value="1"/>
</dbReference>
<dbReference type="FunFam" id="3.40.140.10:FF:000046">
    <property type="entry name" value="AMSH-like ubiquitin thioesterase 2"/>
    <property type="match status" value="1"/>
</dbReference>
<dbReference type="Gene3D" id="3.40.140.10">
    <property type="entry name" value="Cytidine Deaminase, domain 2"/>
    <property type="match status" value="1"/>
</dbReference>
<dbReference type="InterPro" id="IPR000555">
    <property type="entry name" value="JAMM/MPN+_dom"/>
</dbReference>
<dbReference type="InterPro" id="IPR037518">
    <property type="entry name" value="MPN"/>
</dbReference>
<dbReference type="InterPro" id="IPR044098">
    <property type="entry name" value="STAMBP/STALP-like_MPN"/>
</dbReference>
<dbReference type="PANTHER" id="PTHR12947">
    <property type="entry name" value="AMSH-LIKE PROTEASE"/>
    <property type="match status" value="1"/>
</dbReference>
<dbReference type="PANTHER" id="PTHR12947:SF13">
    <property type="entry name" value="FI19924P1"/>
    <property type="match status" value="1"/>
</dbReference>
<dbReference type="Pfam" id="PF01398">
    <property type="entry name" value="JAB"/>
    <property type="match status" value="1"/>
</dbReference>
<dbReference type="SMART" id="SM00232">
    <property type="entry name" value="JAB_MPN"/>
    <property type="match status" value="1"/>
</dbReference>
<dbReference type="SUPFAM" id="SSF102712">
    <property type="entry name" value="JAB1/MPN domain"/>
    <property type="match status" value="1"/>
</dbReference>
<dbReference type="PROSITE" id="PS50249">
    <property type="entry name" value="MPN"/>
    <property type="match status" value="1"/>
</dbReference>
<proteinExistence type="evidence at transcript level"/>
<gene>
    <name type="primary">AMSH2</name>
    <name type="ordered locus">At1g10600</name>
    <name type="ORF">F20B24.2</name>
    <name type="ORF">T10O24.25</name>
</gene>
<keyword id="KW-0025">Alternative splicing</keyword>
<keyword id="KW-0378">Hydrolase</keyword>
<keyword id="KW-0479">Metal-binding</keyword>
<keyword id="KW-0482">Metalloprotease</keyword>
<keyword id="KW-0645">Protease</keyword>
<keyword id="KW-1185">Reference proteome</keyword>
<keyword id="KW-0833">Ubl conjugation pathway</keyword>
<keyword id="KW-0862">Zinc</keyword>
<protein>
    <recommendedName>
        <fullName>AMSH-like ubiquitin thioesterase 2</fullName>
        <ecNumber>3.4.19.-</ecNumber>
    </recommendedName>
    <alternativeName>
        <fullName>Deubiquitinating enzyme AMSH2</fullName>
    </alternativeName>
</protein>
<organism>
    <name type="scientific">Arabidopsis thaliana</name>
    <name type="common">Mouse-ear cress</name>
    <dbReference type="NCBI Taxonomy" id="3702"/>
    <lineage>
        <taxon>Eukaryota</taxon>
        <taxon>Viridiplantae</taxon>
        <taxon>Streptophyta</taxon>
        <taxon>Embryophyta</taxon>
        <taxon>Tracheophyta</taxon>
        <taxon>Spermatophyta</taxon>
        <taxon>Magnoliopsida</taxon>
        <taxon>eudicotyledons</taxon>
        <taxon>Gunneridae</taxon>
        <taxon>Pentapetalae</taxon>
        <taxon>rosids</taxon>
        <taxon>malvids</taxon>
        <taxon>Brassicales</taxon>
        <taxon>Brassicaceae</taxon>
        <taxon>Camelineae</taxon>
        <taxon>Arabidopsis</taxon>
    </lineage>
</organism>
<reference key="1">
    <citation type="journal article" date="2000" name="Nature">
        <title>Sequence and analysis of chromosome 1 of the plant Arabidopsis thaliana.</title>
        <authorList>
            <person name="Theologis A."/>
            <person name="Ecker J.R."/>
            <person name="Palm C.J."/>
            <person name="Federspiel N.A."/>
            <person name="Kaul S."/>
            <person name="White O."/>
            <person name="Alonso J."/>
            <person name="Altafi H."/>
            <person name="Araujo R."/>
            <person name="Bowman C.L."/>
            <person name="Brooks S.Y."/>
            <person name="Buehler E."/>
            <person name="Chan A."/>
            <person name="Chao Q."/>
            <person name="Chen H."/>
            <person name="Cheuk R.F."/>
            <person name="Chin C.W."/>
            <person name="Chung M.K."/>
            <person name="Conn L."/>
            <person name="Conway A.B."/>
            <person name="Conway A.R."/>
            <person name="Creasy T.H."/>
            <person name="Dewar K."/>
            <person name="Dunn P."/>
            <person name="Etgu P."/>
            <person name="Feldblyum T.V."/>
            <person name="Feng J.-D."/>
            <person name="Fong B."/>
            <person name="Fujii C.Y."/>
            <person name="Gill J.E."/>
            <person name="Goldsmith A.D."/>
            <person name="Haas B."/>
            <person name="Hansen N.F."/>
            <person name="Hughes B."/>
            <person name="Huizar L."/>
            <person name="Hunter J.L."/>
            <person name="Jenkins J."/>
            <person name="Johnson-Hopson C."/>
            <person name="Khan S."/>
            <person name="Khaykin E."/>
            <person name="Kim C.J."/>
            <person name="Koo H.L."/>
            <person name="Kremenetskaia I."/>
            <person name="Kurtz D.B."/>
            <person name="Kwan A."/>
            <person name="Lam B."/>
            <person name="Langin-Hooper S."/>
            <person name="Lee A."/>
            <person name="Lee J.M."/>
            <person name="Lenz C.A."/>
            <person name="Li J.H."/>
            <person name="Li Y.-P."/>
            <person name="Lin X."/>
            <person name="Liu S.X."/>
            <person name="Liu Z.A."/>
            <person name="Luros J.S."/>
            <person name="Maiti R."/>
            <person name="Marziali A."/>
            <person name="Militscher J."/>
            <person name="Miranda M."/>
            <person name="Nguyen M."/>
            <person name="Nierman W.C."/>
            <person name="Osborne B.I."/>
            <person name="Pai G."/>
            <person name="Peterson J."/>
            <person name="Pham P.K."/>
            <person name="Rizzo M."/>
            <person name="Rooney T."/>
            <person name="Rowley D."/>
            <person name="Sakano H."/>
            <person name="Salzberg S.L."/>
            <person name="Schwartz J.R."/>
            <person name="Shinn P."/>
            <person name="Southwick A.M."/>
            <person name="Sun H."/>
            <person name="Tallon L.J."/>
            <person name="Tambunga G."/>
            <person name="Toriumi M.J."/>
            <person name="Town C.D."/>
            <person name="Utterback T."/>
            <person name="Van Aken S."/>
            <person name="Vaysberg M."/>
            <person name="Vysotskaia V.S."/>
            <person name="Walker M."/>
            <person name="Wu D."/>
            <person name="Yu G."/>
            <person name="Fraser C.M."/>
            <person name="Venter J.C."/>
            <person name="Davis R.W."/>
        </authorList>
    </citation>
    <scope>NUCLEOTIDE SEQUENCE [LARGE SCALE GENOMIC DNA]</scope>
    <source>
        <strain>cv. Columbia</strain>
    </source>
</reference>
<reference key="2">
    <citation type="journal article" date="2017" name="Plant J.">
        <title>Araport11: a complete reannotation of the Arabidopsis thaliana reference genome.</title>
        <authorList>
            <person name="Cheng C.Y."/>
            <person name="Krishnakumar V."/>
            <person name="Chan A.P."/>
            <person name="Thibaud-Nissen F."/>
            <person name="Schobel S."/>
            <person name="Town C.D."/>
        </authorList>
    </citation>
    <scope>GENOME REANNOTATION</scope>
    <source>
        <strain>cv. Columbia</strain>
    </source>
</reference>
<reference key="3">
    <citation type="journal article" date="2009" name="DNA Res.">
        <title>Analysis of multiple occurrences of alternative splicing events in Arabidopsis thaliana using novel sequenced full-length cDNAs.</title>
        <authorList>
            <person name="Iida K."/>
            <person name="Fukami-Kobayashi K."/>
            <person name="Toyoda A."/>
            <person name="Sakaki Y."/>
            <person name="Kobayashi M."/>
            <person name="Seki M."/>
            <person name="Shinozaki K."/>
        </authorList>
    </citation>
    <scope>NUCLEOTIDE SEQUENCE [LARGE SCALE MRNA] (ISOFORM 3)</scope>
    <source>
        <strain>cv. Columbia</strain>
        <tissue>Rosette leaf</tissue>
    </source>
</reference>
<reference key="4">
    <citation type="submission" date="2004-05" db="EMBL/GenBank/DDBJ databases">
        <title>Arabidopsis ORF clones.</title>
        <authorList>
            <person name="Shinn P."/>
            <person name="Chen H."/>
            <person name="Cheuk R.F."/>
            <person name="Kim C.J."/>
            <person name="Carninci P."/>
            <person name="Hayashizaki Y."/>
            <person name="Ishida J."/>
            <person name="Kamiya A."/>
            <person name="Kawai J."/>
            <person name="Narusaka M."/>
            <person name="Sakurai T."/>
            <person name="Satou M."/>
            <person name="Seki M."/>
            <person name="Shinozaki K."/>
            <person name="Ecker J.R."/>
        </authorList>
    </citation>
    <scope>NUCLEOTIDE SEQUENCE [LARGE SCALE MRNA] (ISOFORM 1)</scope>
    <source>
        <strain>cv. Columbia</strain>
    </source>
</reference>
<reference key="5">
    <citation type="submission" date="2004-09" db="EMBL/GenBank/DDBJ databases">
        <title>Large-scale analysis of RIKEN Arabidopsis full-length (RAFL) cDNAs.</title>
        <authorList>
            <person name="Totoki Y."/>
            <person name="Seki M."/>
            <person name="Ishida J."/>
            <person name="Nakajima M."/>
            <person name="Enju A."/>
            <person name="Kamiya A."/>
            <person name="Narusaka M."/>
            <person name="Shin-i T."/>
            <person name="Nakagawa M."/>
            <person name="Sakamoto N."/>
            <person name="Oishi K."/>
            <person name="Kohara Y."/>
            <person name="Kobayashi M."/>
            <person name="Toyoda A."/>
            <person name="Sakaki Y."/>
            <person name="Sakurai T."/>
            <person name="Iida K."/>
            <person name="Akiyama K."/>
            <person name="Satou M."/>
            <person name="Toyoda T."/>
            <person name="Konagaya A."/>
            <person name="Carninci P."/>
            <person name="Kawai J."/>
            <person name="Hayashizaki Y."/>
            <person name="Shinozaki K."/>
        </authorList>
    </citation>
    <scope>NUCLEOTIDE SEQUENCE [LARGE SCALE MRNA] (ISOFORM 1)</scope>
    <source>
        <strain>cv. Columbia</strain>
    </source>
</reference>
<reference key="6">
    <citation type="journal article" date="2010" name="Plant Cell">
        <title>The deubiquitinating enzyme AMSH3 is required for intracellular trafficking and vacuole biogenesis in Arabidopsis thaliana.</title>
        <authorList>
            <person name="Isono E."/>
            <person name="Katsiarimpa A."/>
            <person name="Mueller I.K."/>
            <person name="Anzenberger F."/>
            <person name="Stierhof Y.-D."/>
            <person name="Geldner N."/>
            <person name="Chory J."/>
            <person name="Schwechheimer C."/>
        </authorList>
    </citation>
    <scope>GENE FAMILY</scope>
    <scope>NOMENCLATURE</scope>
</reference>
<sequence length="223" mass="24939">MVTLSSPSPSLSCVENVTCKSSHVSRVLISGTDNINHGESSEAKILRDVHISERLLEDFTELARENTEKDLETCGTLAAFLERGIFYVTTLIIPKQESTSNSCQAMNEVEVFSIQNERELYPVGWIHTHPSQGCFMSSVDLHTHYSYQVMVPEAFAIVVAPTDSSKSYGIFKLTDPGGMEVLRGCSETGFHPHKEPEDGNPVYEHCSNVYKNSNLRFEIFDLR</sequence>
<accession>Q6NKP9</accession>
<accession>A8MQQ2</accession>
<accession>Q2V4P1</accession>
<accession>Q9SGZ1</accession>
<accession>Q9XII9</accession>
<evidence type="ECO:0000250" key="1"/>
<evidence type="ECO:0000255" key="2">
    <source>
        <dbReference type="PROSITE-ProRule" id="PRU01182"/>
    </source>
</evidence>
<evidence type="ECO:0000303" key="3">
    <source>
    </source>
</evidence>
<evidence type="ECO:0000305" key="4"/>
<comment type="function">
    <text evidence="1">Zinc metalloprotease that cleaves 'Lys-48'- and 'Lys-63'-linked polyubiquitin chains.</text>
</comment>
<comment type="cofactor">
    <cofactor evidence="1">
        <name>Zn(2+)</name>
        <dbReference type="ChEBI" id="CHEBI:29105"/>
    </cofactor>
    <text evidence="1">Binds 2 Zn(2+) ions per subunit.</text>
</comment>
<comment type="alternative products">
    <event type="alternative splicing"/>
    <isoform>
        <id>Q6NKP9-1</id>
        <name>1</name>
        <sequence type="displayed"/>
    </isoform>
    <isoform>
        <id>Q6NKP9-2</id>
        <name>2</name>
        <sequence type="described" ref="VSP_039636"/>
    </isoform>
    <isoform>
        <id>Q6NKP9-3</id>
        <name>3</name>
        <sequence type="described" ref="VSP_039635"/>
    </isoform>
</comment>
<comment type="domain">
    <text evidence="1">The JAMM motif is essential for the protease activity.</text>
</comment>
<comment type="similarity">
    <text evidence="4">Belongs to the peptidase M67C family.</text>
</comment>
<comment type="sequence caution" evidence="4">
    <conflict type="erroneous gene model prediction">
        <sequence resource="EMBL-CDS" id="AAD39585"/>
    </conflict>
</comment>
<comment type="sequence caution" evidence="4">
    <conflict type="erroneous gene model prediction">
        <sequence resource="EMBL-CDS" id="AAF17652"/>
    </conflict>
</comment>